<dbReference type="EC" id="7.1.2.2" evidence="1"/>
<dbReference type="EMBL" id="AY100748">
    <property type="protein sequence ID" value="AAM52102.1"/>
    <property type="molecule type" value="Genomic_DNA"/>
</dbReference>
<dbReference type="SMR" id="Q8MBQ2"/>
<dbReference type="GO" id="GO:0009535">
    <property type="term" value="C:chloroplast thylakoid membrane"/>
    <property type="evidence" value="ECO:0007669"/>
    <property type="project" value="UniProtKB-SubCell"/>
</dbReference>
<dbReference type="GO" id="GO:0005739">
    <property type="term" value="C:mitochondrion"/>
    <property type="evidence" value="ECO:0007669"/>
    <property type="project" value="GOC"/>
</dbReference>
<dbReference type="GO" id="GO:0045259">
    <property type="term" value="C:proton-transporting ATP synthase complex"/>
    <property type="evidence" value="ECO:0007669"/>
    <property type="project" value="UniProtKB-KW"/>
</dbReference>
<dbReference type="GO" id="GO:0005524">
    <property type="term" value="F:ATP binding"/>
    <property type="evidence" value="ECO:0007669"/>
    <property type="project" value="UniProtKB-UniRule"/>
</dbReference>
<dbReference type="GO" id="GO:0016887">
    <property type="term" value="F:ATP hydrolysis activity"/>
    <property type="evidence" value="ECO:0007669"/>
    <property type="project" value="InterPro"/>
</dbReference>
<dbReference type="GO" id="GO:0046933">
    <property type="term" value="F:proton-transporting ATP synthase activity, rotational mechanism"/>
    <property type="evidence" value="ECO:0007669"/>
    <property type="project" value="UniProtKB-UniRule"/>
</dbReference>
<dbReference type="GO" id="GO:0042776">
    <property type="term" value="P:proton motive force-driven mitochondrial ATP synthesis"/>
    <property type="evidence" value="ECO:0007669"/>
    <property type="project" value="TreeGrafter"/>
</dbReference>
<dbReference type="CDD" id="cd18110">
    <property type="entry name" value="ATP-synt_F1_beta_C"/>
    <property type="match status" value="1"/>
</dbReference>
<dbReference type="CDD" id="cd18115">
    <property type="entry name" value="ATP-synt_F1_beta_N"/>
    <property type="match status" value="1"/>
</dbReference>
<dbReference type="CDD" id="cd01133">
    <property type="entry name" value="F1-ATPase_beta_CD"/>
    <property type="match status" value="1"/>
</dbReference>
<dbReference type="FunFam" id="1.10.1140.10:FF:000001">
    <property type="entry name" value="ATP synthase subunit beta"/>
    <property type="match status" value="1"/>
</dbReference>
<dbReference type="FunFam" id="3.40.50.12240:FF:000006">
    <property type="entry name" value="ATP synthase subunit beta"/>
    <property type="match status" value="1"/>
</dbReference>
<dbReference type="FunFam" id="3.40.50.300:FF:000004">
    <property type="entry name" value="ATP synthase subunit beta"/>
    <property type="match status" value="1"/>
</dbReference>
<dbReference type="FunFam" id="2.40.10.170:FF:000002">
    <property type="entry name" value="ATP synthase subunit beta, chloroplastic"/>
    <property type="match status" value="1"/>
</dbReference>
<dbReference type="Gene3D" id="2.40.10.170">
    <property type="match status" value="1"/>
</dbReference>
<dbReference type="Gene3D" id="1.10.1140.10">
    <property type="entry name" value="Bovine Mitochondrial F1-atpase, Atp Synthase Beta Chain, Chain D, domain 3"/>
    <property type="match status" value="1"/>
</dbReference>
<dbReference type="Gene3D" id="3.40.50.300">
    <property type="entry name" value="P-loop containing nucleotide triphosphate hydrolases"/>
    <property type="match status" value="1"/>
</dbReference>
<dbReference type="HAMAP" id="MF_01347">
    <property type="entry name" value="ATP_synth_beta_bact"/>
    <property type="match status" value="1"/>
</dbReference>
<dbReference type="InterPro" id="IPR003593">
    <property type="entry name" value="AAA+_ATPase"/>
</dbReference>
<dbReference type="InterPro" id="IPR055190">
    <property type="entry name" value="ATP-synt_VA_C"/>
</dbReference>
<dbReference type="InterPro" id="IPR005722">
    <property type="entry name" value="ATP_synth_F1_bsu"/>
</dbReference>
<dbReference type="InterPro" id="IPR020003">
    <property type="entry name" value="ATPase_a/bsu_AS"/>
</dbReference>
<dbReference type="InterPro" id="IPR050053">
    <property type="entry name" value="ATPase_alpha/beta_chains"/>
</dbReference>
<dbReference type="InterPro" id="IPR004100">
    <property type="entry name" value="ATPase_F1/V1/A1_a/bsu_N"/>
</dbReference>
<dbReference type="InterPro" id="IPR036121">
    <property type="entry name" value="ATPase_F1/V1/A1_a/bsu_N_sf"/>
</dbReference>
<dbReference type="InterPro" id="IPR000194">
    <property type="entry name" value="ATPase_F1/V1/A1_a/bsu_nucl-bd"/>
</dbReference>
<dbReference type="InterPro" id="IPR024034">
    <property type="entry name" value="ATPase_F1/V1_b/a_C"/>
</dbReference>
<dbReference type="InterPro" id="IPR027417">
    <property type="entry name" value="P-loop_NTPase"/>
</dbReference>
<dbReference type="NCBIfam" id="TIGR01039">
    <property type="entry name" value="atpD"/>
    <property type="match status" value="1"/>
</dbReference>
<dbReference type="PANTHER" id="PTHR15184">
    <property type="entry name" value="ATP SYNTHASE"/>
    <property type="match status" value="1"/>
</dbReference>
<dbReference type="PANTHER" id="PTHR15184:SF71">
    <property type="entry name" value="ATP SYNTHASE SUBUNIT BETA, MITOCHONDRIAL"/>
    <property type="match status" value="1"/>
</dbReference>
<dbReference type="Pfam" id="PF00006">
    <property type="entry name" value="ATP-synt_ab"/>
    <property type="match status" value="1"/>
</dbReference>
<dbReference type="Pfam" id="PF02874">
    <property type="entry name" value="ATP-synt_ab_N"/>
    <property type="match status" value="1"/>
</dbReference>
<dbReference type="Pfam" id="PF22919">
    <property type="entry name" value="ATP-synt_VA_C"/>
    <property type="match status" value="1"/>
</dbReference>
<dbReference type="SMART" id="SM00382">
    <property type="entry name" value="AAA"/>
    <property type="match status" value="1"/>
</dbReference>
<dbReference type="SUPFAM" id="SSF47917">
    <property type="entry name" value="C-terminal domain of alpha and beta subunits of F1 ATP synthase"/>
    <property type="match status" value="1"/>
</dbReference>
<dbReference type="SUPFAM" id="SSF50615">
    <property type="entry name" value="N-terminal domain of alpha and beta subunits of F1 ATP synthase"/>
    <property type="match status" value="1"/>
</dbReference>
<dbReference type="SUPFAM" id="SSF52540">
    <property type="entry name" value="P-loop containing nucleoside triphosphate hydrolases"/>
    <property type="match status" value="1"/>
</dbReference>
<dbReference type="PROSITE" id="PS00152">
    <property type="entry name" value="ATPASE_ALPHA_BETA"/>
    <property type="match status" value="1"/>
</dbReference>
<accession>Q8MBQ2</accession>
<geneLocation type="chloroplast"/>
<comment type="function">
    <text evidence="1">Produces ATP from ADP in the presence of a proton gradient across the membrane. The catalytic sites are hosted primarily by the beta subunits.</text>
</comment>
<comment type="catalytic activity">
    <reaction evidence="1">
        <text>ATP + H2O + 4 H(+)(in) = ADP + phosphate + 5 H(+)(out)</text>
        <dbReference type="Rhea" id="RHEA:57720"/>
        <dbReference type="ChEBI" id="CHEBI:15377"/>
        <dbReference type="ChEBI" id="CHEBI:15378"/>
        <dbReference type="ChEBI" id="CHEBI:30616"/>
        <dbReference type="ChEBI" id="CHEBI:43474"/>
        <dbReference type="ChEBI" id="CHEBI:456216"/>
        <dbReference type="EC" id="7.1.2.2"/>
    </reaction>
</comment>
<comment type="subunit">
    <text evidence="1">F-type ATPases have 2 components, CF(1) - the catalytic core - and CF(0) - the membrane proton channel. CF(1) has five subunits: alpha(3), beta(3), gamma(1), delta(1), epsilon(1). CF(0) has four main subunits: a(1), b(1), b'(1) and c(9-12).</text>
</comment>
<comment type="subcellular location">
    <subcellularLocation>
        <location evidence="1">Plastid</location>
        <location evidence="1">Chloroplast thylakoid membrane</location>
        <topology evidence="1">Peripheral membrane protein</topology>
    </subcellularLocation>
</comment>
<comment type="similarity">
    <text evidence="1">Belongs to the ATPase alpha/beta chains family.</text>
</comment>
<gene>
    <name evidence="1" type="primary">atpB</name>
</gene>
<sequence length="490" mass="52813">MRINPTTSGSEVSAVEKKNLGRIVKIIGPVLDVAFPPGKMPNIYNALVVQGRDNEQTNVTCEVQQLLGNNRVRAVAMSDTDGLMRGMGVIDTGAPISVPVGGSTLGRIFNVLGQPVDNLGPVDTNTTSPIHRSAPAFIQLDTKLSIFETGIKVVDLLAPYRRGGKIGLFGGAGVGKTVLIMELINNIAKAHGGVSVFGGVGERTREGNDLYLEMKESGVINEENIPESKVALVYGQMNEPPGARMRVGLTALTMAEYFRDVNEQDVLLFIDNIFRFVQAGSEVSALLGRMPSAVGYQPTLSTEMGSLQERITSTKEGSITSIQAVYVPADDLTDPAPATTFAHLDATTVLSRGLAAKGIYPAVDPLDSTSTMLQPRIVGEEHYETAQRVKQTLQRYKELQDIIAILGLDELSEEDRLTVARARKIERFLSQPFFVAEVFTGSPGKYVGLAETIRGFQLILSGELDGLPEQAFYLVGNIDEATAKAMNLKT</sequence>
<keyword id="KW-0066">ATP synthesis</keyword>
<keyword id="KW-0067">ATP-binding</keyword>
<keyword id="KW-0139">CF(1)</keyword>
<keyword id="KW-0150">Chloroplast</keyword>
<keyword id="KW-0375">Hydrogen ion transport</keyword>
<keyword id="KW-0406">Ion transport</keyword>
<keyword id="KW-0472">Membrane</keyword>
<keyword id="KW-0547">Nucleotide-binding</keyword>
<keyword id="KW-0934">Plastid</keyword>
<keyword id="KW-0793">Thylakoid</keyword>
<keyword id="KW-1278">Translocase</keyword>
<keyword id="KW-0813">Transport</keyword>
<proteinExistence type="inferred from homology"/>
<protein>
    <recommendedName>
        <fullName evidence="1">ATP synthase subunit beta, chloroplastic</fullName>
        <ecNumber evidence="1">7.1.2.2</ecNumber>
    </recommendedName>
    <alternativeName>
        <fullName evidence="1">ATP synthase F1 sector subunit beta</fullName>
    </alternativeName>
    <alternativeName>
        <fullName evidence="1">F-ATPase subunit beta</fullName>
    </alternativeName>
</protein>
<organism>
    <name type="scientific">Ipomoea wrightii</name>
    <name type="common">Wright's morning glory</name>
    <dbReference type="NCBI Taxonomy" id="89666"/>
    <lineage>
        <taxon>Eukaryota</taxon>
        <taxon>Viridiplantae</taxon>
        <taxon>Streptophyta</taxon>
        <taxon>Embryophyta</taxon>
        <taxon>Tracheophyta</taxon>
        <taxon>Spermatophyta</taxon>
        <taxon>Magnoliopsida</taxon>
        <taxon>eudicotyledons</taxon>
        <taxon>Gunneridae</taxon>
        <taxon>Pentapetalae</taxon>
        <taxon>asterids</taxon>
        <taxon>lamiids</taxon>
        <taxon>Solanales</taxon>
        <taxon>Convolvulaceae</taxon>
        <taxon>Ipomoeeae</taxon>
        <taxon>Ipomoea</taxon>
    </lineage>
</organism>
<name>ATPB_IPOWR</name>
<evidence type="ECO:0000255" key="1">
    <source>
        <dbReference type="HAMAP-Rule" id="MF_01347"/>
    </source>
</evidence>
<reference key="1">
    <citation type="journal article" date="2002" name="Am. J. Bot.">
        <title>Monophyly of the Convolvulaceae and circumscription of their major lineages based on DNA sequences of multiple chloroplast loci.</title>
        <authorList>
            <person name="Stefanovic S."/>
            <person name="Krueger L."/>
            <person name="Olmstead R.G."/>
        </authorList>
        <dbReference type="AGRICOLA" id="IND23320510"/>
    </citation>
    <scope>NUCLEOTIDE SEQUENCE [GENOMIC DNA]</scope>
</reference>
<feature type="chain" id="PRO_0000254491" description="ATP synthase subunit beta, chloroplastic">
    <location>
        <begin position="1"/>
        <end position="490"/>
    </location>
</feature>
<feature type="binding site" evidence="1">
    <location>
        <begin position="170"/>
        <end position="177"/>
    </location>
    <ligand>
        <name>ATP</name>
        <dbReference type="ChEBI" id="CHEBI:30616"/>
    </ligand>
</feature>